<protein>
    <recommendedName>
        <fullName>Na(+)/H(+) antiporter subunit A1</fullName>
    </recommendedName>
    <alternativeName>
        <fullName>Mnh complex subunit A1</fullName>
    </alternativeName>
</protein>
<reference key="1">
    <citation type="journal article" date="2004" name="Proc. Natl. Acad. Sci. U.S.A.">
        <title>Complete genomes of two clinical Staphylococcus aureus strains: evidence for the rapid evolution of virulence and drug resistance.</title>
        <authorList>
            <person name="Holden M.T.G."/>
            <person name="Feil E.J."/>
            <person name="Lindsay J.A."/>
            <person name="Peacock S.J."/>
            <person name="Day N.P.J."/>
            <person name="Enright M.C."/>
            <person name="Foster T.J."/>
            <person name="Moore C.E."/>
            <person name="Hurst L."/>
            <person name="Atkin R."/>
            <person name="Barron A."/>
            <person name="Bason N."/>
            <person name="Bentley S.D."/>
            <person name="Chillingworth C."/>
            <person name="Chillingworth T."/>
            <person name="Churcher C."/>
            <person name="Clark L."/>
            <person name="Corton C."/>
            <person name="Cronin A."/>
            <person name="Doggett J."/>
            <person name="Dowd L."/>
            <person name="Feltwell T."/>
            <person name="Hance Z."/>
            <person name="Harris B."/>
            <person name="Hauser H."/>
            <person name="Holroyd S."/>
            <person name="Jagels K."/>
            <person name="James K.D."/>
            <person name="Lennard N."/>
            <person name="Line A."/>
            <person name="Mayes R."/>
            <person name="Moule S."/>
            <person name="Mungall K."/>
            <person name="Ormond D."/>
            <person name="Quail M.A."/>
            <person name="Rabbinowitsch E."/>
            <person name="Rutherford K.M."/>
            <person name="Sanders M."/>
            <person name="Sharp S."/>
            <person name="Simmonds M."/>
            <person name="Stevens K."/>
            <person name="Whitehead S."/>
            <person name="Barrell B.G."/>
            <person name="Spratt B.G."/>
            <person name="Parkhill J."/>
        </authorList>
    </citation>
    <scope>NUCLEOTIDE SEQUENCE [LARGE SCALE GENOMIC DNA]</scope>
    <source>
        <strain>MSSA476</strain>
    </source>
</reference>
<comment type="function">
    <text>Mnh complex is a Na(+)/H(+) antiporter involved in Na(+) excretion.</text>
</comment>
<comment type="activity regulation">
    <text>Na(+) extrusion is completely inhibited by the H(+) conductor carbonyl cyanide m-chlorophenylhydrazone (CCCP).</text>
</comment>
<comment type="subunit">
    <text evidence="1">May form a heterooligomeric complex that consists of seven subunits: mnhA1, mnhB1, mnhC1, mnhD1, mnhE1, mnhF1 and mnhG1.</text>
</comment>
<comment type="subcellular location">
    <subcellularLocation>
        <location evidence="3">Cell membrane</location>
        <topology evidence="3">Multi-pass membrane protein</topology>
    </subcellularLocation>
</comment>
<comment type="similarity">
    <text evidence="3">Belongs to the CPA3 antiporters (TC 2.A.63) subunit A family.</text>
</comment>
<feature type="chain" id="PRO_0000217070" description="Na(+)/H(+) antiporter subunit A1">
    <location>
        <begin position="1"/>
        <end position="801"/>
    </location>
</feature>
<feature type="transmembrane region" description="Helical" evidence="2">
    <location>
        <begin position="4"/>
        <end position="25"/>
    </location>
</feature>
<feature type="transmembrane region" description="Helical" evidence="2">
    <location>
        <begin position="30"/>
        <end position="49"/>
    </location>
</feature>
<feature type="transmembrane region" description="Helical" evidence="2">
    <location>
        <begin position="79"/>
        <end position="101"/>
    </location>
</feature>
<feature type="transmembrane region" description="Helical" evidence="2">
    <location>
        <begin position="108"/>
        <end position="127"/>
    </location>
</feature>
<feature type="transmembrane region" description="Helical" evidence="2">
    <location>
        <begin position="131"/>
        <end position="153"/>
    </location>
</feature>
<feature type="transmembrane region" description="Helical" evidence="2">
    <location>
        <begin position="166"/>
        <end position="188"/>
    </location>
</feature>
<feature type="transmembrane region" description="Helical" evidence="2">
    <location>
        <begin position="208"/>
        <end position="230"/>
    </location>
</feature>
<feature type="transmembrane region" description="Helical" evidence="2">
    <location>
        <begin position="243"/>
        <end position="265"/>
    </location>
</feature>
<feature type="transmembrane region" description="Helical" evidence="2">
    <location>
        <begin position="270"/>
        <end position="289"/>
    </location>
</feature>
<feature type="transmembrane region" description="Helical" evidence="2">
    <location>
        <begin position="302"/>
        <end position="324"/>
    </location>
</feature>
<feature type="transmembrane region" description="Helical" evidence="2">
    <location>
        <begin position="339"/>
        <end position="361"/>
    </location>
</feature>
<feature type="transmembrane region" description="Helical" evidence="2">
    <location>
        <begin position="373"/>
        <end position="395"/>
    </location>
</feature>
<feature type="transmembrane region" description="Helical" evidence="2">
    <location>
        <begin position="429"/>
        <end position="451"/>
    </location>
</feature>
<feature type="transmembrane region" description="Helical" evidence="2">
    <location>
        <begin position="472"/>
        <end position="494"/>
    </location>
</feature>
<feature type="transmembrane region" description="Helical" evidence="2">
    <location>
        <begin position="526"/>
        <end position="548"/>
    </location>
</feature>
<feature type="transmembrane region" description="Helical" evidence="2">
    <location>
        <begin position="589"/>
        <end position="611"/>
    </location>
</feature>
<feature type="transmembrane region" description="Helical" evidence="2">
    <location>
        <begin position="621"/>
        <end position="641"/>
    </location>
</feature>
<feature type="transmembrane region" description="Helical" evidence="2">
    <location>
        <begin position="646"/>
        <end position="668"/>
    </location>
</feature>
<feature type="transmembrane region" description="Helical" evidence="2">
    <location>
        <begin position="672"/>
        <end position="694"/>
    </location>
</feature>
<feature type="transmembrane region" description="Helical" evidence="2">
    <location>
        <begin position="707"/>
        <end position="729"/>
    </location>
</feature>
<feature type="transmembrane region" description="Helical" evidence="2">
    <location>
        <begin position="767"/>
        <end position="784"/>
    </location>
</feature>
<keyword id="KW-0050">Antiport</keyword>
<keyword id="KW-1003">Cell membrane</keyword>
<keyword id="KW-0375">Hydrogen ion transport</keyword>
<keyword id="KW-0406">Ion transport</keyword>
<keyword id="KW-0472">Membrane</keyword>
<keyword id="KW-0915">Sodium</keyword>
<keyword id="KW-0739">Sodium transport</keyword>
<keyword id="KW-0812">Transmembrane</keyword>
<keyword id="KW-1133">Transmembrane helix</keyword>
<keyword id="KW-0813">Transport</keyword>
<gene>
    <name type="primary">mnhA1</name>
    <name type="ordered locus">SAS0822</name>
</gene>
<accession>Q6GAX4</accession>
<organism>
    <name type="scientific">Staphylococcus aureus (strain MSSA476)</name>
    <dbReference type="NCBI Taxonomy" id="282459"/>
    <lineage>
        <taxon>Bacteria</taxon>
        <taxon>Bacillati</taxon>
        <taxon>Bacillota</taxon>
        <taxon>Bacilli</taxon>
        <taxon>Bacillales</taxon>
        <taxon>Staphylococcaceae</taxon>
        <taxon>Staphylococcus</taxon>
    </lineage>
</organism>
<name>MNHA1_STAAS</name>
<dbReference type="EMBL" id="BX571857">
    <property type="protein sequence ID" value="CAG42597.1"/>
    <property type="molecule type" value="Genomic_DNA"/>
</dbReference>
<dbReference type="RefSeq" id="WP_000054609.1">
    <property type="nucleotide sequence ID" value="NC_002953.3"/>
</dbReference>
<dbReference type="SMR" id="Q6GAX4"/>
<dbReference type="KEGG" id="sas:SAS0822"/>
<dbReference type="HOGENOM" id="CLU_007100_2_1_9"/>
<dbReference type="GO" id="GO:0005886">
    <property type="term" value="C:plasma membrane"/>
    <property type="evidence" value="ECO:0007669"/>
    <property type="project" value="UniProtKB-SubCell"/>
</dbReference>
<dbReference type="GO" id="GO:0015297">
    <property type="term" value="F:antiporter activity"/>
    <property type="evidence" value="ECO:0007669"/>
    <property type="project" value="UniProtKB-KW"/>
</dbReference>
<dbReference type="GO" id="GO:1902600">
    <property type="term" value="P:proton transmembrane transport"/>
    <property type="evidence" value="ECO:0007669"/>
    <property type="project" value="UniProtKB-KW"/>
</dbReference>
<dbReference type="GO" id="GO:0006814">
    <property type="term" value="P:sodium ion transport"/>
    <property type="evidence" value="ECO:0007669"/>
    <property type="project" value="UniProtKB-KW"/>
</dbReference>
<dbReference type="InterPro" id="IPR050616">
    <property type="entry name" value="CPA3_Na-H_Antiporter_A"/>
</dbReference>
<dbReference type="InterPro" id="IPR005663">
    <property type="entry name" value="MrpA/MnhA1/PhaAB"/>
</dbReference>
<dbReference type="InterPro" id="IPR025383">
    <property type="entry name" value="MrpA_C/MbhD"/>
</dbReference>
<dbReference type="InterPro" id="IPR046806">
    <property type="entry name" value="MrpA_C/MbhE"/>
</dbReference>
<dbReference type="InterPro" id="IPR001750">
    <property type="entry name" value="ND/Mrp_TM"/>
</dbReference>
<dbReference type="InterPro" id="IPR001516">
    <property type="entry name" value="Proton_antipo_N"/>
</dbReference>
<dbReference type="NCBIfam" id="TIGR00940">
    <property type="entry name" value="2a6301s01"/>
    <property type="match status" value="1"/>
</dbReference>
<dbReference type="NCBIfam" id="NF009285">
    <property type="entry name" value="PRK12645.1"/>
    <property type="match status" value="1"/>
</dbReference>
<dbReference type="PANTHER" id="PTHR43373">
    <property type="entry name" value="NA(+)/H(+) ANTIPORTER SUBUNIT"/>
    <property type="match status" value="1"/>
</dbReference>
<dbReference type="PANTHER" id="PTHR43373:SF1">
    <property type="entry name" value="NA(+)_H(+) ANTIPORTER SUBUNIT A"/>
    <property type="match status" value="1"/>
</dbReference>
<dbReference type="Pfam" id="PF13244">
    <property type="entry name" value="MbhD"/>
    <property type="match status" value="1"/>
</dbReference>
<dbReference type="Pfam" id="PF20501">
    <property type="entry name" value="MbhE"/>
    <property type="match status" value="1"/>
</dbReference>
<dbReference type="Pfam" id="PF00361">
    <property type="entry name" value="Proton_antipo_M"/>
    <property type="match status" value="1"/>
</dbReference>
<dbReference type="Pfam" id="PF00662">
    <property type="entry name" value="Proton_antipo_N"/>
    <property type="match status" value="1"/>
</dbReference>
<dbReference type="PRINTS" id="PR01434">
    <property type="entry name" value="NADHDHGNASE5"/>
</dbReference>
<dbReference type="PRINTS" id="PR01435">
    <property type="entry name" value="NPOXDRDTASE5"/>
</dbReference>
<evidence type="ECO:0000250" key="1"/>
<evidence type="ECO:0000255" key="2"/>
<evidence type="ECO:0000305" key="3"/>
<sequence length="801" mass="89396">MSLLHIAVILPLIFALIIPILYRFFKRIHLGWFVLPVPIVIFIYMLTLIKTTMSGNTVMKTLNWMPHFGMNFDLYLDGLGLLFSLLISGIGSLVVLYSIGYLSKSEQLGNFYCYLLLFMGAMLGVVLSDNVIILYLFWELTSFSSFLLISFWRERQASIYGAQKSLIITVFGGLSLLGGIILLAIPTQSFSIQYMIQHASEIQNSPFFIFAMILIMIGAFTKSAQFPFYIWLPDAMEAPTPVSAYLHSATMVKAGLYLIARMTPIFAASQGWVWTVTLVGLITLFWASLNATKQQDLKGILAFSTVSQLGMIMAMLGIGAISYHYQGDDSKIYAAAFTAAIFHLINHATFKGALFMITGAVDHSTGTRDVKKLGGLLTIMPISFTITVITALSMAGVPPFNGFLSKESFLETTFTASQANLFSVDTLGYLFPIIGIVGSVFTFVYSIKFIMHIFFGQYKPEQLPKKAHEVSILMLLSPAILATLVIVFGLFPGILTNSIIEPATSSINHTVIDDVEFHMFHGLTPAFLSTLVIYILGILLIVTFSYWVKLLQRQPGKLTFNYWYNRSANVIPNYSEKMTNSYVTDYSRNNLVIIFGALILLTFVTIFSVPFNINFKDVSPIRIFEVCIVILLLSAAFLILFAKSRLFSIIMLSAVGYAVSVLFIFFKAPDLALTQFVVESISTALFLLCFYHLPNLNRYNEKRSFQLTNALIAGGVGLSVIIIGLIAYGNRHFESISKFYQEHVYDLAHGKNMVNVILVDFRGMDTLFESSVLGIAGLAVYTMIKLRKKRQTQGNEVKNHE</sequence>
<proteinExistence type="inferred from homology"/>